<feature type="chain" id="PRO_0000318886" description="Transcriptional regulator MraZ">
    <location>
        <begin position="1"/>
        <end position="150"/>
    </location>
</feature>
<feature type="domain" description="SpoVT-AbrB 1" evidence="2">
    <location>
        <begin position="7"/>
        <end position="55"/>
    </location>
</feature>
<feature type="domain" description="SpoVT-AbrB 2" evidence="2">
    <location>
        <begin position="84"/>
        <end position="127"/>
    </location>
</feature>
<sequence>MSNFLGSHAINMDAKGRLAIPTKVREELAQLCGGRIVLTANADEEKCLLLYPEPEWEVLRPKIEALPNMNKAAKRLQRLILGNAALMELDASGRILVPQTLRNHANLEKRLMLVGLGKKYELWSEESWNAYLDASAADEEMPPEMEALSL</sequence>
<keyword id="KW-0963">Cytoplasm</keyword>
<keyword id="KW-0238">DNA-binding</keyword>
<keyword id="KW-0677">Repeat</keyword>
<keyword id="KW-0804">Transcription</keyword>
<keyword id="KW-0805">Transcription regulation</keyword>
<evidence type="ECO:0000255" key="1">
    <source>
        <dbReference type="HAMAP-Rule" id="MF_01008"/>
    </source>
</evidence>
<evidence type="ECO:0000255" key="2">
    <source>
        <dbReference type="PROSITE-ProRule" id="PRU01076"/>
    </source>
</evidence>
<protein>
    <recommendedName>
        <fullName>Transcriptional regulator MraZ</fullName>
    </recommendedName>
</protein>
<name>MRAZ_MARN8</name>
<proteinExistence type="inferred from homology"/>
<accession>A1U3G7</accession>
<reference key="1">
    <citation type="journal article" date="2011" name="Appl. Environ. Microbiol.">
        <title>Genomic potential of Marinobacter aquaeolei, a biogeochemical 'opportunitroph'.</title>
        <authorList>
            <person name="Singer E."/>
            <person name="Webb E.A."/>
            <person name="Nelson W.C."/>
            <person name="Heidelberg J.F."/>
            <person name="Ivanova N."/>
            <person name="Pati A."/>
            <person name="Edwards K.J."/>
        </authorList>
    </citation>
    <scope>NUCLEOTIDE SEQUENCE [LARGE SCALE GENOMIC DNA]</scope>
    <source>
        <strain>ATCC 700491 / DSM 11845 / VT8</strain>
    </source>
</reference>
<dbReference type="EMBL" id="CP000514">
    <property type="protein sequence ID" value="ABM19536.1"/>
    <property type="molecule type" value="Genomic_DNA"/>
</dbReference>
<dbReference type="RefSeq" id="WP_011785920.1">
    <property type="nucleotide sequence ID" value="NC_008740.1"/>
</dbReference>
<dbReference type="SMR" id="A1U3G7"/>
<dbReference type="STRING" id="351348.Maqu_2461"/>
<dbReference type="GeneID" id="31820285"/>
<dbReference type="KEGG" id="maq:Maqu_2461"/>
<dbReference type="eggNOG" id="COG2001">
    <property type="taxonomic scope" value="Bacteria"/>
</dbReference>
<dbReference type="HOGENOM" id="CLU_107907_2_0_6"/>
<dbReference type="OrthoDB" id="9807753at2"/>
<dbReference type="Proteomes" id="UP000000998">
    <property type="component" value="Chromosome"/>
</dbReference>
<dbReference type="GO" id="GO:0005737">
    <property type="term" value="C:cytoplasm"/>
    <property type="evidence" value="ECO:0007669"/>
    <property type="project" value="UniProtKB-UniRule"/>
</dbReference>
<dbReference type="GO" id="GO:0009295">
    <property type="term" value="C:nucleoid"/>
    <property type="evidence" value="ECO:0007669"/>
    <property type="project" value="UniProtKB-SubCell"/>
</dbReference>
<dbReference type="GO" id="GO:0003700">
    <property type="term" value="F:DNA-binding transcription factor activity"/>
    <property type="evidence" value="ECO:0007669"/>
    <property type="project" value="UniProtKB-UniRule"/>
</dbReference>
<dbReference type="GO" id="GO:0000976">
    <property type="term" value="F:transcription cis-regulatory region binding"/>
    <property type="evidence" value="ECO:0007669"/>
    <property type="project" value="TreeGrafter"/>
</dbReference>
<dbReference type="GO" id="GO:2000143">
    <property type="term" value="P:negative regulation of DNA-templated transcription initiation"/>
    <property type="evidence" value="ECO:0007669"/>
    <property type="project" value="TreeGrafter"/>
</dbReference>
<dbReference type="CDD" id="cd16321">
    <property type="entry name" value="MraZ_C"/>
    <property type="match status" value="1"/>
</dbReference>
<dbReference type="CDD" id="cd16320">
    <property type="entry name" value="MraZ_N"/>
    <property type="match status" value="1"/>
</dbReference>
<dbReference type="Gene3D" id="3.40.1550.20">
    <property type="entry name" value="Transcriptional regulator MraZ domain"/>
    <property type="match status" value="1"/>
</dbReference>
<dbReference type="HAMAP" id="MF_01008">
    <property type="entry name" value="MraZ"/>
    <property type="match status" value="1"/>
</dbReference>
<dbReference type="InterPro" id="IPR003444">
    <property type="entry name" value="MraZ"/>
</dbReference>
<dbReference type="InterPro" id="IPR035644">
    <property type="entry name" value="MraZ_C"/>
</dbReference>
<dbReference type="InterPro" id="IPR020603">
    <property type="entry name" value="MraZ_dom"/>
</dbReference>
<dbReference type="InterPro" id="IPR035642">
    <property type="entry name" value="MraZ_N"/>
</dbReference>
<dbReference type="InterPro" id="IPR038619">
    <property type="entry name" value="MraZ_sf"/>
</dbReference>
<dbReference type="InterPro" id="IPR007159">
    <property type="entry name" value="SpoVT-AbrB_dom"/>
</dbReference>
<dbReference type="InterPro" id="IPR037914">
    <property type="entry name" value="SpoVT-AbrB_sf"/>
</dbReference>
<dbReference type="NCBIfam" id="TIGR00242">
    <property type="entry name" value="division/cell wall cluster transcriptional repressor MraZ"/>
    <property type="match status" value="1"/>
</dbReference>
<dbReference type="PANTHER" id="PTHR34701">
    <property type="entry name" value="TRANSCRIPTIONAL REGULATOR MRAZ"/>
    <property type="match status" value="1"/>
</dbReference>
<dbReference type="PANTHER" id="PTHR34701:SF1">
    <property type="entry name" value="TRANSCRIPTIONAL REGULATOR MRAZ"/>
    <property type="match status" value="1"/>
</dbReference>
<dbReference type="Pfam" id="PF02381">
    <property type="entry name" value="MraZ"/>
    <property type="match status" value="2"/>
</dbReference>
<dbReference type="SUPFAM" id="SSF89447">
    <property type="entry name" value="AbrB/MazE/MraZ-like"/>
    <property type="match status" value="1"/>
</dbReference>
<dbReference type="PROSITE" id="PS51740">
    <property type="entry name" value="SPOVT_ABRB"/>
    <property type="match status" value="2"/>
</dbReference>
<comment type="subunit">
    <text evidence="1">Forms oligomers.</text>
</comment>
<comment type="subcellular location">
    <subcellularLocation>
        <location evidence="1">Cytoplasm</location>
        <location evidence="1">Nucleoid</location>
    </subcellularLocation>
</comment>
<comment type="similarity">
    <text evidence="1">Belongs to the MraZ family.</text>
</comment>
<organism>
    <name type="scientific">Marinobacter nauticus (strain ATCC 700491 / DSM 11845 / VT8)</name>
    <name type="common">Marinobacter aquaeolei</name>
    <dbReference type="NCBI Taxonomy" id="351348"/>
    <lineage>
        <taxon>Bacteria</taxon>
        <taxon>Pseudomonadati</taxon>
        <taxon>Pseudomonadota</taxon>
        <taxon>Gammaproteobacteria</taxon>
        <taxon>Pseudomonadales</taxon>
        <taxon>Marinobacteraceae</taxon>
        <taxon>Marinobacter</taxon>
    </lineage>
</organism>
<gene>
    <name evidence="1" type="primary">mraZ</name>
    <name type="ordered locus">Maqu_2461</name>
</gene>